<reference key="1">
    <citation type="journal article" date="2005" name="Nature">
        <title>Genome sequencing and analysis of Aspergillus oryzae.</title>
        <authorList>
            <person name="Machida M."/>
            <person name="Asai K."/>
            <person name="Sano M."/>
            <person name="Tanaka T."/>
            <person name="Kumagai T."/>
            <person name="Terai G."/>
            <person name="Kusumoto K."/>
            <person name="Arima T."/>
            <person name="Akita O."/>
            <person name="Kashiwagi Y."/>
            <person name="Abe K."/>
            <person name="Gomi K."/>
            <person name="Horiuchi H."/>
            <person name="Kitamoto K."/>
            <person name="Kobayashi T."/>
            <person name="Takeuchi M."/>
            <person name="Denning D.W."/>
            <person name="Galagan J.E."/>
            <person name="Nierman W.C."/>
            <person name="Yu J."/>
            <person name="Archer D.B."/>
            <person name="Bennett J.W."/>
            <person name="Bhatnagar D."/>
            <person name="Cleveland T.E."/>
            <person name="Fedorova N.D."/>
            <person name="Gotoh O."/>
            <person name="Horikawa H."/>
            <person name="Hosoyama A."/>
            <person name="Ichinomiya M."/>
            <person name="Igarashi R."/>
            <person name="Iwashita K."/>
            <person name="Juvvadi P.R."/>
            <person name="Kato M."/>
            <person name="Kato Y."/>
            <person name="Kin T."/>
            <person name="Kokubun A."/>
            <person name="Maeda H."/>
            <person name="Maeyama N."/>
            <person name="Maruyama J."/>
            <person name="Nagasaki H."/>
            <person name="Nakajima T."/>
            <person name="Oda K."/>
            <person name="Okada K."/>
            <person name="Paulsen I."/>
            <person name="Sakamoto K."/>
            <person name="Sawano T."/>
            <person name="Takahashi M."/>
            <person name="Takase K."/>
            <person name="Terabayashi Y."/>
            <person name="Wortman J.R."/>
            <person name="Yamada O."/>
            <person name="Yamagata Y."/>
            <person name="Anazawa H."/>
            <person name="Hata Y."/>
            <person name="Koide Y."/>
            <person name="Komori T."/>
            <person name="Koyama Y."/>
            <person name="Minetoki T."/>
            <person name="Suharnan S."/>
            <person name="Tanaka A."/>
            <person name="Isono K."/>
            <person name="Kuhara S."/>
            <person name="Ogasawara N."/>
            <person name="Kikuchi H."/>
        </authorList>
    </citation>
    <scope>NUCLEOTIDE SEQUENCE [LARGE SCALE GENOMIC DNA]</scope>
    <source>
        <strain>ATCC 42149 / RIB 40</strain>
    </source>
</reference>
<evidence type="ECO:0000250" key="1"/>
<evidence type="ECO:0000250" key="2">
    <source>
        <dbReference type="UniProtKB" id="Q2UP89"/>
    </source>
</evidence>
<evidence type="ECO:0000250" key="3">
    <source>
        <dbReference type="UniProtKB" id="Q8WZI8"/>
    </source>
</evidence>
<evidence type="ECO:0000255" key="4"/>
<evidence type="ECO:0000305" key="5"/>
<evidence type="ECO:0007829" key="6">
    <source>
        <dbReference type="PDB" id="6G21"/>
    </source>
</evidence>
<dbReference type="EC" id="3.1.1.73" evidence="3"/>
<dbReference type="EMBL" id="BA000050">
    <property type="protein sequence ID" value="BAE57089.1"/>
    <property type="molecule type" value="Genomic_DNA"/>
</dbReference>
<dbReference type="RefSeq" id="XP_001819091.1">
    <property type="nucleotide sequence ID" value="XM_001819039.1"/>
</dbReference>
<dbReference type="PDB" id="6G21">
    <property type="method" value="X-ray"/>
    <property type="resolution" value="2.10 A"/>
    <property type="chains" value="A/B=20-526"/>
</dbReference>
<dbReference type="PDBsum" id="6G21"/>
<dbReference type="SMR" id="Q2UMX6"/>
<dbReference type="STRING" id="510516.Q2UMX6"/>
<dbReference type="ESTHER" id="aspor-q2umx6">
    <property type="family name" value="Tannase"/>
</dbReference>
<dbReference type="GlyCosmos" id="Q2UMX6">
    <property type="glycosylation" value="9 sites, No reported glycans"/>
</dbReference>
<dbReference type="EnsemblFungi" id="BAE57089">
    <property type="protein sequence ID" value="BAE57089"/>
    <property type="gene ID" value="AO090001000582"/>
</dbReference>
<dbReference type="GeneID" id="5991062"/>
<dbReference type="KEGG" id="aor:AO090001000582"/>
<dbReference type="VEuPathDB" id="FungiDB:AO090001000582"/>
<dbReference type="HOGENOM" id="CLU_014819_1_0_1"/>
<dbReference type="OMA" id="AWFPREY"/>
<dbReference type="OrthoDB" id="4157at5052"/>
<dbReference type="BRENDA" id="3.1.1.73">
    <property type="organism ID" value="522"/>
</dbReference>
<dbReference type="Proteomes" id="UP000006564">
    <property type="component" value="Chromosome 2"/>
</dbReference>
<dbReference type="GO" id="GO:0005576">
    <property type="term" value="C:extracellular region"/>
    <property type="evidence" value="ECO:0007669"/>
    <property type="project" value="UniProtKB-SubCell"/>
</dbReference>
<dbReference type="GO" id="GO:0030600">
    <property type="term" value="F:feruloyl esterase activity"/>
    <property type="evidence" value="ECO:0000314"/>
    <property type="project" value="AspGD"/>
</dbReference>
<dbReference type="GO" id="GO:0046872">
    <property type="term" value="F:metal ion binding"/>
    <property type="evidence" value="ECO:0007669"/>
    <property type="project" value="UniProtKB-KW"/>
</dbReference>
<dbReference type="GO" id="GO:0045493">
    <property type="term" value="P:xylan catabolic process"/>
    <property type="evidence" value="ECO:0007669"/>
    <property type="project" value="UniProtKB-KW"/>
</dbReference>
<dbReference type="Gene3D" id="3.40.50.1820">
    <property type="entry name" value="alpha/beta hydrolase"/>
    <property type="match status" value="1"/>
</dbReference>
<dbReference type="InterPro" id="IPR029058">
    <property type="entry name" value="AB_hydrolase_fold"/>
</dbReference>
<dbReference type="InterPro" id="IPR011118">
    <property type="entry name" value="Tannase/feruloyl_esterase"/>
</dbReference>
<dbReference type="PANTHER" id="PTHR33938">
    <property type="entry name" value="FERULOYL ESTERASE B-RELATED"/>
    <property type="match status" value="1"/>
</dbReference>
<dbReference type="PANTHER" id="PTHR33938:SF15">
    <property type="entry name" value="FERULOYL ESTERASE B-RELATED"/>
    <property type="match status" value="1"/>
</dbReference>
<dbReference type="Pfam" id="PF07519">
    <property type="entry name" value="Tannase"/>
    <property type="match status" value="1"/>
</dbReference>
<dbReference type="SUPFAM" id="SSF53474">
    <property type="entry name" value="alpha/beta-Hydrolases"/>
    <property type="match status" value="1"/>
</dbReference>
<comment type="function">
    <text evidence="3">Involved in degradation of plant cell walls. Hydrolyzes the feruloyl-arabinose ester bond in arabinoxylans as well as the feruloyl-galactose and feruloyl-arabinose ester bonds in pectin.</text>
</comment>
<comment type="catalytic activity">
    <reaction evidence="3">
        <text>feruloyl-polysaccharide + H2O = ferulate + polysaccharide.</text>
        <dbReference type="EC" id="3.1.1.73"/>
    </reaction>
</comment>
<comment type="subcellular location">
    <subcellularLocation>
        <location evidence="1">Secreted</location>
    </subcellularLocation>
</comment>
<comment type="similarity">
    <text evidence="5">Belongs to the tannase family.</text>
</comment>
<keyword id="KW-0002">3D-structure</keyword>
<keyword id="KW-0106">Calcium</keyword>
<keyword id="KW-0119">Carbohydrate metabolism</keyword>
<keyword id="KW-1015">Disulfide bond</keyword>
<keyword id="KW-0325">Glycoprotein</keyword>
<keyword id="KW-0378">Hydrolase</keyword>
<keyword id="KW-0479">Metal-binding</keyword>
<keyword id="KW-0624">Polysaccharide degradation</keyword>
<keyword id="KW-1185">Reference proteome</keyword>
<keyword id="KW-0964">Secreted</keyword>
<keyword id="KW-0719">Serine esterase</keyword>
<keyword id="KW-0732">Signal</keyword>
<keyword id="KW-0858">Xylan degradation</keyword>
<proteinExistence type="evidence at protein level"/>
<organism>
    <name type="scientific">Aspergillus oryzae (strain ATCC 42149 / RIB 40)</name>
    <name type="common">Yellow koji mold</name>
    <dbReference type="NCBI Taxonomy" id="510516"/>
    <lineage>
        <taxon>Eukaryota</taxon>
        <taxon>Fungi</taxon>
        <taxon>Dikarya</taxon>
        <taxon>Ascomycota</taxon>
        <taxon>Pezizomycotina</taxon>
        <taxon>Eurotiomycetes</taxon>
        <taxon>Eurotiomycetidae</taxon>
        <taxon>Eurotiales</taxon>
        <taxon>Aspergillaceae</taxon>
        <taxon>Aspergillus</taxon>
        <taxon>Aspergillus subgen. Circumdati</taxon>
    </lineage>
</organism>
<accession>Q2UMX6</accession>
<gene>
    <name type="primary">faeB-2</name>
    <name type="ORF">AO090001000582</name>
</gene>
<protein>
    <recommendedName>
        <fullName>Probable feruloyl esterase B-2</fullName>
        <ecNumber evidence="3">3.1.1.73</ecNumber>
    </recommendedName>
    <alternativeName>
        <fullName>Ferulic acid esterase B-2</fullName>
        <shortName>FAEB-2</shortName>
    </alternativeName>
</protein>
<feature type="signal peptide" evidence="4">
    <location>
        <begin position="1"/>
        <end position="19"/>
    </location>
</feature>
<feature type="chain" id="PRO_0000394930" description="Probable feruloyl esterase B-2">
    <location>
        <begin position="20"/>
        <end position="526"/>
    </location>
</feature>
<feature type="active site" description="Acyl-ester intermediate" evidence="2">
    <location>
        <position position="188"/>
    </location>
</feature>
<feature type="active site" description="Charge relay system" evidence="2">
    <location>
        <position position="400"/>
    </location>
</feature>
<feature type="active site" description="Charge relay system" evidence="2">
    <location>
        <position position="440"/>
    </location>
</feature>
<feature type="binding site" evidence="2">
    <location>
        <position position="257"/>
    </location>
    <ligand>
        <name>Ca(2+)</name>
        <dbReference type="ChEBI" id="CHEBI:29108"/>
    </ligand>
</feature>
<feature type="binding site" evidence="2">
    <location>
        <position position="260"/>
    </location>
    <ligand>
        <name>Ca(2+)</name>
        <dbReference type="ChEBI" id="CHEBI:29108"/>
    </ligand>
</feature>
<feature type="binding site" evidence="2">
    <location>
        <position position="262"/>
    </location>
    <ligand>
        <name>Ca(2+)</name>
        <dbReference type="ChEBI" id="CHEBI:29108"/>
    </ligand>
</feature>
<feature type="binding site" evidence="2">
    <location>
        <position position="264"/>
    </location>
    <ligand>
        <name>Ca(2+)</name>
        <dbReference type="ChEBI" id="CHEBI:29108"/>
    </ligand>
</feature>
<feature type="binding site" evidence="2">
    <location>
        <position position="266"/>
    </location>
    <ligand>
        <name>Ca(2+)</name>
        <dbReference type="ChEBI" id="CHEBI:29108"/>
    </ligand>
</feature>
<feature type="glycosylation site" description="N-linked (GlcNAc...) asparagine" evidence="4">
    <location>
        <position position="53"/>
    </location>
</feature>
<feature type="glycosylation site" description="N-linked (GlcNAc...) asparagine" evidence="4">
    <location>
        <position position="85"/>
    </location>
</feature>
<feature type="glycosylation site" description="N-linked (GlcNAc...) asparagine" evidence="4">
    <location>
        <position position="98"/>
    </location>
</feature>
<feature type="glycosylation site" description="N-linked (GlcNAc...) asparagine" evidence="4">
    <location>
        <position position="138"/>
    </location>
</feature>
<feature type="glycosylation site" description="N-linked (GlcNAc...) asparagine" evidence="4">
    <location>
        <position position="246"/>
    </location>
</feature>
<feature type="glycosylation site" description="N-linked (GlcNAc...) asparagine" evidence="4">
    <location>
        <position position="287"/>
    </location>
</feature>
<feature type="glycosylation site" description="N-linked (GlcNAc...) asparagine" evidence="4">
    <location>
        <position position="311"/>
    </location>
</feature>
<feature type="glycosylation site" description="N-linked (GlcNAc...) asparagine" evidence="4">
    <location>
        <position position="490"/>
    </location>
</feature>
<feature type="glycosylation site" description="N-linked (GlcNAc...) asparagine" evidence="4">
    <location>
        <position position="516"/>
    </location>
</feature>
<feature type="disulfide bond" evidence="2">
    <location>
        <begin position="28"/>
        <end position="75"/>
    </location>
</feature>
<feature type="disulfide bond" evidence="2">
    <location>
        <begin position="63"/>
        <end position="114"/>
    </location>
</feature>
<feature type="disulfide bond" evidence="2">
    <location>
        <begin position="187"/>
        <end position="441"/>
    </location>
</feature>
<feature type="disulfide bond" evidence="2">
    <location>
        <begin position="256"/>
        <end position="273"/>
    </location>
</feature>
<feature type="disulfide bond" evidence="2">
    <location>
        <begin position="282"/>
        <end position="291"/>
    </location>
</feature>
<feature type="disulfide bond" evidence="2">
    <location>
        <begin position="503"/>
        <end position="525"/>
    </location>
</feature>
<feature type="helix" evidence="6">
    <location>
        <begin position="24"/>
        <end position="29"/>
    </location>
</feature>
<feature type="helix" evidence="6">
    <location>
        <begin position="32"/>
        <end position="34"/>
    </location>
</feature>
<feature type="strand" evidence="6">
    <location>
        <begin position="40"/>
        <end position="48"/>
    </location>
</feature>
<feature type="strand" evidence="6">
    <location>
        <begin position="52"/>
        <end position="55"/>
    </location>
</feature>
<feature type="helix" evidence="6">
    <location>
        <begin position="61"/>
        <end position="63"/>
    </location>
</feature>
<feature type="strand" evidence="6">
    <location>
        <begin position="67"/>
        <end position="70"/>
    </location>
</feature>
<feature type="strand" evidence="6">
    <location>
        <begin position="74"/>
        <end position="84"/>
    </location>
</feature>
<feature type="strand" evidence="6">
    <location>
        <begin position="87"/>
        <end position="98"/>
    </location>
</feature>
<feature type="strand" evidence="6">
    <location>
        <begin position="101"/>
        <end position="105"/>
    </location>
</feature>
<feature type="helix" evidence="6">
    <location>
        <begin position="117"/>
        <end position="125"/>
    </location>
</feature>
<feature type="strand" evidence="6">
    <location>
        <begin position="129"/>
        <end position="133"/>
    </location>
</feature>
<feature type="strand" evidence="6">
    <location>
        <begin position="137"/>
        <end position="140"/>
    </location>
</feature>
<feature type="helix" evidence="6">
    <location>
        <begin position="143"/>
        <end position="145"/>
    </location>
</feature>
<feature type="helix" evidence="6">
    <location>
        <begin position="149"/>
        <end position="156"/>
    </location>
</feature>
<feature type="helix" evidence="6">
    <location>
        <begin position="158"/>
        <end position="174"/>
    </location>
</feature>
<feature type="strand" evidence="6">
    <location>
        <begin position="180"/>
        <end position="187"/>
    </location>
</feature>
<feature type="helix" evidence="6">
    <location>
        <begin position="189"/>
        <end position="200"/>
    </location>
</feature>
<feature type="strand" evidence="6">
    <location>
        <begin position="206"/>
        <end position="212"/>
    </location>
</feature>
<feature type="helix" evidence="6">
    <location>
        <begin position="217"/>
        <end position="231"/>
    </location>
</feature>
<feature type="helix" evidence="6">
    <location>
        <begin position="242"/>
        <end position="256"/>
    </location>
</feature>
<feature type="helix" evidence="6">
    <location>
        <begin position="257"/>
        <end position="260"/>
    </location>
</feature>
<feature type="helix" evidence="6">
    <location>
        <begin position="270"/>
        <end position="272"/>
    </location>
</feature>
<feature type="helix" evidence="6">
    <location>
        <begin position="277"/>
        <end position="280"/>
    </location>
</feature>
<feature type="helix" evidence="6">
    <location>
        <begin position="288"/>
        <end position="290"/>
    </location>
</feature>
<feature type="helix" evidence="6">
    <location>
        <begin position="294"/>
        <end position="303"/>
    </location>
</feature>
<feature type="helix" evidence="6">
    <location>
        <begin position="310"/>
        <end position="312"/>
    </location>
</feature>
<feature type="strand" evidence="6">
    <location>
        <begin position="314"/>
        <end position="316"/>
    </location>
</feature>
<feature type="helix" evidence="6">
    <location>
        <begin position="324"/>
        <end position="330"/>
    </location>
</feature>
<feature type="strand" evidence="6">
    <location>
        <begin position="332"/>
        <end position="335"/>
    </location>
</feature>
<feature type="helix" evidence="6">
    <location>
        <begin position="338"/>
        <end position="346"/>
    </location>
</feature>
<feature type="helix" evidence="6">
    <location>
        <begin position="356"/>
        <end position="358"/>
    </location>
</feature>
<feature type="helix" evidence="6">
    <location>
        <begin position="361"/>
        <end position="370"/>
    </location>
</feature>
<feature type="helix" evidence="6">
    <location>
        <begin position="372"/>
        <end position="374"/>
    </location>
</feature>
<feature type="helix" evidence="6">
    <location>
        <begin position="383"/>
        <end position="388"/>
    </location>
</feature>
<feature type="strand" evidence="6">
    <location>
        <begin position="391"/>
        <end position="397"/>
    </location>
</feature>
<feature type="strand" evidence="6">
    <location>
        <begin position="401"/>
        <end position="403"/>
    </location>
</feature>
<feature type="helix" evidence="6">
    <location>
        <begin position="405"/>
        <end position="419"/>
    </location>
</feature>
<feature type="helix" evidence="6">
    <location>
        <begin position="423"/>
        <end position="426"/>
    </location>
</feature>
<feature type="turn" evidence="6">
    <location>
        <begin position="427"/>
        <end position="429"/>
    </location>
</feature>
<feature type="strand" evidence="6">
    <location>
        <begin position="430"/>
        <end position="435"/>
    </location>
</feature>
<feature type="strand" evidence="6">
    <location>
        <begin position="440"/>
        <end position="442"/>
    </location>
</feature>
<feature type="strand" evidence="6">
    <location>
        <begin position="449"/>
        <end position="453"/>
    </location>
</feature>
<feature type="helix" evidence="6">
    <location>
        <begin position="454"/>
        <end position="456"/>
    </location>
</feature>
<feature type="turn" evidence="6">
    <location>
        <begin position="462"/>
        <end position="464"/>
    </location>
</feature>
<feature type="helix" evidence="6">
    <location>
        <begin position="466"/>
        <end position="476"/>
    </location>
</feature>
<feature type="strand" evidence="6">
    <location>
        <begin position="481"/>
        <end position="491"/>
    </location>
</feature>
<feature type="strand" evidence="6">
    <location>
        <begin position="496"/>
        <end position="502"/>
    </location>
</feature>
<feature type="strand" evidence="6">
    <location>
        <begin position="509"/>
        <end position="511"/>
    </location>
</feature>
<feature type="helix" evidence="6">
    <location>
        <begin position="520"/>
        <end position="522"/>
    </location>
</feature>
<feature type="strand" evidence="6">
    <location>
        <begin position="523"/>
        <end position="525"/>
    </location>
</feature>
<sequence length="526" mass="57747">MPSLRRLLPFLAAGSAALASQDTFQGKCTGFADKINLPNVRVNFVNYVPGGTNLSLPDNPTSCGTTSQVVSEDVCRIAMAVATSNSSEITLEAWLPQNYTGRFLSTGNGGLSGCIQYYDLAYTSGLGFATVGANSGHNGTSGEPFYHHPEVLEDFVHRSVHTGVVVGKQLTKLFYEEGFKKSYYLGCSTGGRQGFKSVQKYPNDFDGVVAGAPAFNMINLMSWSAHFYSITGPVGSDTYLSPDLWNITHKEILRQCDGIDGAEDGIIEDPSLCSPVLEAIICKPGQNTTECLTGKQAHTVREIFSPLYGVNGTLLYPRMQPGSEVMASSIMYNGQPFQYSADWYRYVVYENPNWDATKFSVRDAAVALKQNPFNLQTWDADISSFRKAGGKVLTYHGLMDQLISSENSKLYYARVAETMNVPPEELDEFYRFFQISGMAHCSGGDGAYGIGNQLVTYNDANPENNVLMAMVQWVEKGIAPETIRGAKFTNGTGSAVEYTRKHCRYPRRNVYKGPGNYTDENAWQCV</sequence>
<name>FAEB2_ASPOR</name>